<name>LSCA_PSESG</name>
<feature type="chain" id="PRO_0000057718" description="Levansucrase LscA">
    <location>
        <begin position="1"/>
        <end position="415"/>
    </location>
</feature>
<feature type="active site" description="Nucleophile" evidence="1">
    <location>
        <position position="46"/>
    </location>
</feature>
<feature type="active site" description="Proton donor/acceptor" evidence="1">
    <location>
        <position position="287"/>
    </location>
</feature>
<feature type="binding site" evidence="1">
    <location>
        <position position="45"/>
    </location>
    <ligand>
        <name>sucrose</name>
        <dbReference type="ChEBI" id="CHEBI:17992"/>
    </ligand>
</feature>
<feature type="binding site" evidence="1">
    <location>
        <position position="46"/>
    </location>
    <ligand>
        <name>sucrose</name>
        <dbReference type="ChEBI" id="CHEBI:17992"/>
    </ligand>
</feature>
<feature type="binding site" evidence="1">
    <location>
        <position position="132"/>
    </location>
    <ligand>
        <name>sucrose</name>
        <dbReference type="ChEBI" id="CHEBI:17992"/>
    </ligand>
</feature>
<feature type="binding site" evidence="1">
    <location>
        <position position="202"/>
    </location>
    <ligand>
        <name>sucrose</name>
        <dbReference type="ChEBI" id="CHEBI:17992"/>
    </ligand>
</feature>
<feature type="binding site" evidence="1">
    <location>
        <position position="203"/>
    </location>
    <ligand>
        <name>sucrose</name>
        <dbReference type="ChEBI" id="CHEBI:17992"/>
    </ligand>
</feature>
<feature type="site" description="Transition state stabilizer" evidence="1">
    <location>
        <position position="203"/>
    </location>
</feature>
<organism>
    <name type="scientific">Pseudomonas savastanoi pv. glycinea</name>
    <name type="common">Pseudomonas syringae pv. glycinea</name>
    <dbReference type="NCBI Taxonomy" id="318"/>
    <lineage>
        <taxon>Bacteria</taxon>
        <taxon>Pseudomonadati</taxon>
        <taxon>Pseudomonadota</taxon>
        <taxon>Gammaproteobacteria</taxon>
        <taxon>Pseudomonadales</taxon>
        <taxon>Pseudomonadaceae</taxon>
        <taxon>Pseudomonas</taxon>
    </lineage>
</organism>
<sequence>MSNINYAPTIWSRADALKVNENDPTTTQPLVSPDFPVMSDTVFIWDTMPLRELDGTVVSVNGWSVIVTLTADRHPDDPQYVGANGRYDIKRDWEDRHGRARMCYWYSRTGKDWIFGGRVMAEGVSPTTREWAGTPVLLNDKGDIDLYYTCVTPGAAIAKVRGRIVTSDKGVELKDFTEVKTLFEADGKYYQTEAQNSTWNFRDPSPFIDPNDGKLYMVFEGNVAGERGTHTVGAAELGPVPPGHEETGGARFQVGCIGLAVAKDLSGDEWEILPPLVTAVGVNDQTERPHYVFQDGKYYLFTISHKFTYADGVTGPDGVYGFVGEHLFGPYRPMNASGLVLGNPPAQPFQTYSHCVMPNGLVTSFIDSVPTSGEDYRIGGTEAPTVRILLEGDRSFVQEVYDYGYIPAMKNVVLS</sequence>
<proteinExistence type="evidence at protein level"/>
<reference key="1">
    <citation type="journal article" date="1998" name="Appl. Environ. Microbiol.">
        <title>Cloning, nucleotide sequence, and expression in Escherichia coli of levansucrase genes from the plant pathogens Pseudomonas syringae pv. glycinea and P. syringae pv. phaseolicola.</title>
        <authorList>
            <person name="Hettwer U."/>
            <person name="Jaeckel F.R."/>
            <person name="Boch J."/>
            <person name="Meyer M."/>
            <person name="Rudolph K."/>
            <person name="Ullrich M.S."/>
        </authorList>
    </citation>
    <scope>NUCLEOTIDE SEQUENCE [GENOMIC DNA]</scope>
    <scope>FUNCTION</scope>
    <scope>CATALYTIC ACTIVITY</scope>
    <scope>SUBCELLULAR LOCATION</scope>
    <scope>DISRUPTION PHENOTYPE</scope>
    <scope>EXPRESSION IN E.COLI</scope>
    <source>
        <strain>PG4180</strain>
    </source>
</reference>
<reference key="2">
    <citation type="journal article" date="2001" name="J. Bacteriol.">
        <title>Characterization and mutational analysis of three allelic lsc genes encoding levansucrase in Pseudomonas syringae.</title>
        <authorList>
            <person name="Li H."/>
            <person name="Ullrich M.S."/>
        </authorList>
    </citation>
    <scope>FUNCTION</scope>
    <scope>CATALYTIC ACTIVITY</scope>
    <scope>DISRUPTION PHENOTYPE</scope>
    <scope>LACK OF EXPRESSION IN P.SYRINGAE</scope>
    <source>
        <strain>PG4180</strain>
    </source>
</reference>
<reference key="3">
    <citation type="journal article" date="2014" name="BMC Microbiol.">
        <title>The conserved upstream region of lscB/C determines expression of different levansucrase genes in plant pathogen Pseudomonas syringae.</title>
        <authorList>
            <person name="Khandekar S."/>
            <person name="Srivastava A."/>
            <person name="Pletzer D."/>
            <person name="Stahl A."/>
            <person name="Ullrich M.S."/>
        </authorList>
    </citation>
    <scope>FUNCTION</scope>
    <scope>LACK OF EXPRESSION IN P.SYRINGAE</scope>
    <scope>TRANSCRIPTIONAL REGULATION</scope>
    <scope>IDENTIFICATION BY MASS SPECTROMETRY</scope>
    <source>
        <strain>PG4180</strain>
    </source>
</reference>
<keyword id="KW-0119">Carbohydrate metabolism</keyword>
<keyword id="KW-0328">Glycosyltransferase</keyword>
<keyword id="KW-0574">Periplasm</keyword>
<keyword id="KW-0808">Transferase</keyword>
<gene>
    <name evidence="5" type="primary">lscA</name>
    <name evidence="6" type="synonym">lsc</name>
</gene>
<accession>O52408</accession>
<comment type="function">
    <text evidence="2 3 4">Catalyzes the synthesis of levan, a fructose polymer, by transferring the fructosyl moiety from sucrose to a growing acceptor molecule (PubMed:11344135, PubMed:9726857). LscA encodes a functional enzyme in vitro, when expressed in E.coli under control of the vector-based lactose promoter (Plac), and it can restore levan production to the lscB-lscC double mutant (PubMed:11344135). However, lscA is not expressed in P.savastanoi pv. glycinea PG4180 under standard conditions (PubMed:11344135, PubMed:24670199). It could be an ancestral Lsc variant in P.syringae (PubMed:24670199).</text>
</comment>
<comment type="catalytic activity">
    <reaction evidence="2 4">
        <text>[6)-beta-D-fructofuranosyl-(2-&gt;](n) alpha-D-glucopyranoside + sucrose = [6)-beta-D-fructofuranosyl-(2-&gt;](n+1) alpha-D-glucopyranoside + D-glucose</text>
        <dbReference type="Rhea" id="RHEA:13653"/>
        <dbReference type="Rhea" id="RHEA-COMP:13093"/>
        <dbReference type="Rhea" id="RHEA-COMP:13094"/>
        <dbReference type="ChEBI" id="CHEBI:4167"/>
        <dbReference type="ChEBI" id="CHEBI:17992"/>
        <dbReference type="ChEBI" id="CHEBI:134464"/>
        <dbReference type="EC" id="2.4.1.10"/>
    </reaction>
</comment>
<comment type="subcellular location">
    <subcellularLocation>
        <location evidence="4">Periplasm</location>
    </subcellularLocation>
    <text evidence="4">When expressed in E.coli under control of Plac.</text>
</comment>
<comment type="induction">
    <text evidence="3">A phage-associated promoter element (PAPE), which includes the first 48 nucleotides of the gene, is present in lscB and lscC, but not in lscA (PubMed:24670199). It probably explains the lack of expression of lscA in P.syringae (PubMed:24670199).</text>
</comment>
<comment type="disruption phenotype">
    <text evidence="2 4">Disruption mutant does not exhibit a levan-deficient phenotype (PubMed:11344135). The lscA-lscB and lscA-lscC double mutants also do not exhibit a levan-deficient phenotype (PubMed:11344135). Insertion of an antibiotic resistance cassette in the recombinant lscA gene abolishes levan synthesis when expressed in E.coli (PubMed:9726857).</text>
</comment>
<comment type="miscellaneous">
    <text evidence="2">Strain PG4180 contains three levansucrase-encoding genes: lscA, lscB and lscC (PubMed:11344135). Of the three copies, only lscB and lscC have been shown to be expressed while no expression was observed for lscA under the tested growth conditions (PubMed:11344135).</text>
</comment>
<comment type="similarity">
    <text evidence="7">Belongs to the glycosyl hydrolase 68 family.</text>
</comment>
<dbReference type="EC" id="2.4.1.10" evidence="2 4"/>
<dbReference type="EMBL" id="AF037443">
    <property type="protein sequence ID" value="AAC36056.1"/>
    <property type="molecule type" value="Genomic_DNA"/>
</dbReference>
<dbReference type="RefSeq" id="WP_004664779.1">
    <property type="nucleotide sequence ID" value="NZ_RBVH01000735.1"/>
</dbReference>
<dbReference type="SMR" id="O52408"/>
<dbReference type="CAZy" id="GH68">
    <property type="family name" value="Glycoside Hydrolase Family 68"/>
</dbReference>
<dbReference type="PATRIC" id="fig|318.3.peg.3339"/>
<dbReference type="GO" id="GO:0042597">
    <property type="term" value="C:periplasmic space"/>
    <property type="evidence" value="ECO:0007669"/>
    <property type="project" value="UniProtKB-SubCell"/>
</dbReference>
<dbReference type="GO" id="GO:0050053">
    <property type="term" value="F:levansucrase activity"/>
    <property type="evidence" value="ECO:0007669"/>
    <property type="project" value="UniProtKB-EC"/>
</dbReference>
<dbReference type="GO" id="GO:0009758">
    <property type="term" value="P:carbohydrate utilization"/>
    <property type="evidence" value="ECO:0007669"/>
    <property type="project" value="InterPro"/>
</dbReference>
<dbReference type="CDD" id="cd08997">
    <property type="entry name" value="GH68"/>
    <property type="match status" value="1"/>
</dbReference>
<dbReference type="FunFam" id="2.115.10.20:FF:000007">
    <property type="entry name" value="Levansucrase LscB"/>
    <property type="match status" value="1"/>
</dbReference>
<dbReference type="Gene3D" id="2.115.10.20">
    <property type="entry name" value="Glycosyl hydrolase domain, family 43"/>
    <property type="match status" value="1"/>
</dbReference>
<dbReference type="InterPro" id="IPR003469">
    <property type="entry name" value="Glyco_hydro_68"/>
</dbReference>
<dbReference type="InterPro" id="IPR023296">
    <property type="entry name" value="Glyco_hydro_beta-prop_sf"/>
</dbReference>
<dbReference type="Pfam" id="PF02435">
    <property type="entry name" value="Glyco_hydro_68"/>
    <property type="match status" value="1"/>
</dbReference>
<dbReference type="SUPFAM" id="SSF75005">
    <property type="entry name" value="Arabinanase/levansucrase/invertase"/>
    <property type="match status" value="1"/>
</dbReference>
<evidence type="ECO:0000250" key="1">
    <source>
        <dbReference type="UniProtKB" id="P05655"/>
    </source>
</evidence>
<evidence type="ECO:0000269" key="2">
    <source>
    </source>
</evidence>
<evidence type="ECO:0000269" key="3">
    <source>
    </source>
</evidence>
<evidence type="ECO:0000269" key="4">
    <source>
    </source>
</evidence>
<evidence type="ECO:0000303" key="5">
    <source>
    </source>
</evidence>
<evidence type="ECO:0000303" key="6">
    <source>
    </source>
</evidence>
<evidence type="ECO:0000305" key="7"/>
<protein>
    <recommendedName>
        <fullName evidence="5">Levansucrase LscA</fullName>
        <ecNumber evidence="2 4">2.4.1.10</ecNumber>
    </recommendedName>
    <alternativeName>
        <fullName>Beta-D-fructofuranosyl transferase</fullName>
    </alternativeName>
    <alternativeName>
        <fullName evidence="7">Sucrose 6-fructosyltransferase</fullName>
    </alternativeName>
</protein>